<name>PCKA_BRASO</name>
<sequence length="537" mass="58743">MQETGIRNGAFGADKFGLKNLKQLHWNLGAPQLYQYSLAAGEATLSADGALCADTGEFTGRSPKDKFTVRDASTEKMWWAGNQSITPEQFEALYQDFIKHAEGKTLFAQDLYGGADPTFRIKTRVFTELAWHSLFIRTLLIRPETIELDTFVPELTIIDMPSFRADPMRHGVRSQNVVAIDFARKIVLIGGSYYAGEMKKSVFTTLNYYLPARGVMPMHCSANVGPKGDTAIFFGLSGTGKTTLSADPNRTLIGDDEHGWGPSGVFNFEGGCYAKCIKLSQEAEPQIFAASNRFGAVLENVVLDEDSRVPDFDDGSKTENTRSAYPLDYIPNASRTGRAPHPKNVVMLAADAFGVLPPIAKLSPAQAMYHFLSGYTAKVAGTERGLGSEPQPEFSTCFGSPFLPLDPSVYGNMLRQLIADHNVDCWLVNTGWTGGKYGTGSRMPIKVTRALLTAALDGSLRNVEFRTDKYFGFAVPTALPGVPSEILDPVNTWKDKVEFDKTARALVGMFQKNFAKFEAQVDADVRAAAPDVKLAAE</sequence>
<reference key="1">
    <citation type="journal article" date="2007" name="Science">
        <title>Legumes symbioses: absence of nod genes in photosynthetic bradyrhizobia.</title>
        <authorList>
            <person name="Giraud E."/>
            <person name="Moulin L."/>
            <person name="Vallenet D."/>
            <person name="Barbe V."/>
            <person name="Cytryn E."/>
            <person name="Avarre J.-C."/>
            <person name="Jaubert M."/>
            <person name="Simon D."/>
            <person name="Cartieaux F."/>
            <person name="Prin Y."/>
            <person name="Bena G."/>
            <person name="Hannibal L."/>
            <person name="Fardoux J."/>
            <person name="Kojadinovic M."/>
            <person name="Vuillet L."/>
            <person name="Lajus A."/>
            <person name="Cruveiller S."/>
            <person name="Rouy Z."/>
            <person name="Mangenot S."/>
            <person name="Segurens B."/>
            <person name="Dossat C."/>
            <person name="Franck W.L."/>
            <person name="Chang W.-S."/>
            <person name="Saunders E."/>
            <person name="Bruce D."/>
            <person name="Richardson P."/>
            <person name="Normand P."/>
            <person name="Dreyfus B."/>
            <person name="Pignol D."/>
            <person name="Stacey G."/>
            <person name="Emerich D."/>
            <person name="Vermeglio A."/>
            <person name="Medigue C."/>
            <person name="Sadowsky M."/>
        </authorList>
    </citation>
    <scope>NUCLEOTIDE SEQUENCE [LARGE SCALE GENOMIC DNA]</scope>
    <source>
        <strain>ORS 278</strain>
    </source>
</reference>
<keyword id="KW-0067">ATP-binding</keyword>
<keyword id="KW-0963">Cytoplasm</keyword>
<keyword id="KW-0210">Decarboxylase</keyword>
<keyword id="KW-0312">Gluconeogenesis</keyword>
<keyword id="KW-0456">Lyase</keyword>
<keyword id="KW-0464">Manganese</keyword>
<keyword id="KW-0479">Metal-binding</keyword>
<keyword id="KW-0547">Nucleotide-binding</keyword>
<keyword id="KW-1185">Reference proteome</keyword>
<proteinExistence type="inferred from homology"/>
<evidence type="ECO:0000255" key="1">
    <source>
        <dbReference type="HAMAP-Rule" id="MF_00453"/>
    </source>
</evidence>
<organism>
    <name type="scientific">Bradyrhizobium sp. (strain ORS 278)</name>
    <dbReference type="NCBI Taxonomy" id="114615"/>
    <lineage>
        <taxon>Bacteria</taxon>
        <taxon>Pseudomonadati</taxon>
        <taxon>Pseudomonadota</taxon>
        <taxon>Alphaproteobacteria</taxon>
        <taxon>Hyphomicrobiales</taxon>
        <taxon>Nitrobacteraceae</taxon>
        <taxon>Bradyrhizobium</taxon>
    </lineage>
</organism>
<protein>
    <recommendedName>
        <fullName evidence="1">Phosphoenolpyruvate carboxykinase (ATP)</fullName>
        <shortName evidence="1">PCK</shortName>
        <shortName evidence="1">PEP carboxykinase</shortName>
        <shortName evidence="1">PEPCK</shortName>
        <ecNumber evidence="1">4.1.1.49</ecNumber>
    </recommendedName>
</protein>
<dbReference type="EC" id="4.1.1.49" evidence="1"/>
<dbReference type="EMBL" id="CU234118">
    <property type="protein sequence ID" value="CAL74666.1"/>
    <property type="molecule type" value="Genomic_DNA"/>
</dbReference>
<dbReference type="RefSeq" id="WP_011923925.1">
    <property type="nucleotide sequence ID" value="NC_009445.1"/>
</dbReference>
<dbReference type="SMR" id="A4YL90"/>
<dbReference type="STRING" id="114615.BRADO0741"/>
<dbReference type="KEGG" id="bra:BRADO0741"/>
<dbReference type="eggNOG" id="COG1866">
    <property type="taxonomic scope" value="Bacteria"/>
</dbReference>
<dbReference type="HOGENOM" id="CLU_018247_0_1_5"/>
<dbReference type="OrthoDB" id="9806325at2"/>
<dbReference type="UniPathway" id="UPA00138"/>
<dbReference type="Proteomes" id="UP000001994">
    <property type="component" value="Chromosome"/>
</dbReference>
<dbReference type="GO" id="GO:0005829">
    <property type="term" value="C:cytosol"/>
    <property type="evidence" value="ECO:0007669"/>
    <property type="project" value="TreeGrafter"/>
</dbReference>
<dbReference type="GO" id="GO:0005524">
    <property type="term" value="F:ATP binding"/>
    <property type="evidence" value="ECO:0007669"/>
    <property type="project" value="UniProtKB-UniRule"/>
</dbReference>
<dbReference type="GO" id="GO:0046872">
    <property type="term" value="F:metal ion binding"/>
    <property type="evidence" value="ECO:0007669"/>
    <property type="project" value="UniProtKB-KW"/>
</dbReference>
<dbReference type="GO" id="GO:0004612">
    <property type="term" value="F:phosphoenolpyruvate carboxykinase (ATP) activity"/>
    <property type="evidence" value="ECO:0007669"/>
    <property type="project" value="UniProtKB-UniRule"/>
</dbReference>
<dbReference type="GO" id="GO:0006094">
    <property type="term" value="P:gluconeogenesis"/>
    <property type="evidence" value="ECO:0007669"/>
    <property type="project" value="UniProtKB-UniRule"/>
</dbReference>
<dbReference type="CDD" id="cd00484">
    <property type="entry name" value="PEPCK_ATP"/>
    <property type="match status" value="1"/>
</dbReference>
<dbReference type="FunFam" id="2.170.8.10:FF:000001">
    <property type="entry name" value="Phosphoenolpyruvate carboxykinase (ATP)"/>
    <property type="match status" value="1"/>
</dbReference>
<dbReference type="Gene3D" id="3.90.228.20">
    <property type="match status" value="1"/>
</dbReference>
<dbReference type="Gene3D" id="3.40.449.10">
    <property type="entry name" value="Phosphoenolpyruvate Carboxykinase, domain 1"/>
    <property type="match status" value="1"/>
</dbReference>
<dbReference type="Gene3D" id="2.170.8.10">
    <property type="entry name" value="Phosphoenolpyruvate Carboxykinase, domain 2"/>
    <property type="match status" value="1"/>
</dbReference>
<dbReference type="HAMAP" id="MF_00453">
    <property type="entry name" value="PEPCK_ATP"/>
    <property type="match status" value="1"/>
</dbReference>
<dbReference type="InterPro" id="IPR001272">
    <property type="entry name" value="PEP_carboxykinase_ATP"/>
</dbReference>
<dbReference type="InterPro" id="IPR013035">
    <property type="entry name" value="PEP_carboxykinase_C"/>
</dbReference>
<dbReference type="InterPro" id="IPR008210">
    <property type="entry name" value="PEP_carboxykinase_N"/>
</dbReference>
<dbReference type="InterPro" id="IPR015994">
    <property type="entry name" value="PEPCK_ATP_CS"/>
</dbReference>
<dbReference type="NCBIfam" id="TIGR00224">
    <property type="entry name" value="pckA"/>
    <property type="match status" value="1"/>
</dbReference>
<dbReference type="NCBIfam" id="NF006820">
    <property type="entry name" value="PRK09344.1-2"/>
    <property type="match status" value="1"/>
</dbReference>
<dbReference type="NCBIfam" id="NF006821">
    <property type="entry name" value="PRK09344.1-3"/>
    <property type="match status" value="1"/>
</dbReference>
<dbReference type="NCBIfam" id="NF006822">
    <property type="entry name" value="PRK09344.1-4"/>
    <property type="match status" value="1"/>
</dbReference>
<dbReference type="PANTHER" id="PTHR30031:SF0">
    <property type="entry name" value="PHOSPHOENOLPYRUVATE CARBOXYKINASE (ATP)"/>
    <property type="match status" value="1"/>
</dbReference>
<dbReference type="PANTHER" id="PTHR30031">
    <property type="entry name" value="PHOSPHOENOLPYRUVATE CARBOXYKINASE ATP"/>
    <property type="match status" value="1"/>
</dbReference>
<dbReference type="Pfam" id="PF01293">
    <property type="entry name" value="PEPCK_ATP"/>
    <property type="match status" value="1"/>
</dbReference>
<dbReference type="PIRSF" id="PIRSF006294">
    <property type="entry name" value="PEP_crbxkin"/>
    <property type="match status" value="1"/>
</dbReference>
<dbReference type="SUPFAM" id="SSF68923">
    <property type="entry name" value="PEP carboxykinase N-terminal domain"/>
    <property type="match status" value="1"/>
</dbReference>
<dbReference type="SUPFAM" id="SSF53795">
    <property type="entry name" value="PEP carboxykinase-like"/>
    <property type="match status" value="1"/>
</dbReference>
<dbReference type="PROSITE" id="PS00532">
    <property type="entry name" value="PEPCK_ATP"/>
    <property type="match status" value="1"/>
</dbReference>
<comment type="function">
    <text evidence="1">Involved in the gluconeogenesis. Catalyzes the conversion of oxaloacetate (OAA) to phosphoenolpyruvate (PEP) through direct phosphoryl transfer between the nucleoside triphosphate and OAA.</text>
</comment>
<comment type="catalytic activity">
    <reaction evidence="1">
        <text>oxaloacetate + ATP = phosphoenolpyruvate + ADP + CO2</text>
        <dbReference type="Rhea" id="RHEA:18617"/>
        <dbReference type="ChEBI" id="CHEBI:16452"/>
        <dbReference type="ChEBI" id="CHEBI:16526"/>
        <dbReference type="ChEBI" id="CHEBI:30616"/>
        <dbReference type="ChEBI" id="CHEBI:58702"/>
        <dbReference type="ChEBI" id="CHEBI:456216"/>
        <dbReference type="EC" id="4.1.1.49"/>
    </reaction>
</comment>
<comment type="cofactor">
    <cofactor evidence="1">
        <name>Mn(2+)</name>
        <dbReference type="ChEBI" id="CHEBI:29035"/>
    </cofactor>
    <text evidence="1">Binds 1 Mn(2+) ion per subunit.</text>
</comment>
<comment type="pathway">
    <text evidence="1">Carbohydrate biosynthesis; gluconeogenesis.</text>
</comment>
<comment type="subcellular location">
    <subcellularLocation>
        <location evidence="1">Cytoplasm</location>
    </subcellularLocation>
</comment>
<comment type="similarity">
    <text evidence="1">Belongs to the phosphoenolpyruvate carboxykinase (ATP) family.</text>
</comment>
<accession>A4YL90</accession>
<feature type="chain" id="PRO_1000026318" description="Phosphoenolpyruvate carboxykinase (ATP)">
    <location>
        <begin position="1"/>
        <end position="537"/>
    </location>
</feature>
<feature type="binding site" evidence="1">
    <location>
        <position position="61"/>
    </location>
    <ligand>
        <name>substrate</name>
    </ligand>
</feature>
<feature type="binding site" evidence="1">
    <location>
        <position position="194"/>
    </location>
    <ligand>
        <name>substrate</name>
    </ligand>
</feature>
<feature type="binding site" evidence="1">
    <location>
        <position position="200"/>
    </location>
    <ligand>
        <name>ATP</name>
        <dbReference type="ChEBI" id="CHEBI:30616"/>
    </ligand>
</feature>
<feature type="binding site" evidence="1">
    <location>
        <position position="200"/>
    </location>
    <ligand>
        <name>Mn(2+)</name>
        <dbReference type="ChEBI" id="CHEBI:29035"/>
    </ligand>
</feature>
<feature type="binding site" evidence="1">
    <location>
        <position position="200"/>
    </location>
    <ligand>
        <name>substrate</name>
    </ligand>
</feature>
<feature type="binding site" evidence="1">
    <location>
        <position position="219"/>
    </location>
    <ligand>
        <name>ATP</name>
        <dbReference type="ChEBI" id="CHEBI:30616"/>
    </ligand>
</feature>
<feature type="binding site" evidence="1">
    <location>
        <position position="219"/>
    </location>
    <ligand>
        <name>Mn(2+)</name>
        <dbReference type="ChEBI" id="CHEBI:29035"/>
    </ligand>
</feature>
<feature type="binding site" evidence="1">
    <location>
        <begin position="235"/>
        <end position="243"/>
    </location>
    <ligand>
        <name>ATP</name>
        <dbReference type="ChEBI" id="CHEBI:30616"/>
    </ligand>
</feature>
<feature type="binding site" evidence="1">
    <location>
        <position position="256"/>
    </location>
    <ligand>
        <name>Mn(2+)</name>
        <dbReference type="ChEBI" id="CHEBI:29035"/>
    </ligand>
</feature>
<feature type="binding site" evidence="1">
    <location>
        <position position="284"/>
    </location>
    <ligand>
        <name>ATP</name>
        <dbReference type="ChEBI" id="CHEBI:30616"/>
    </ligand>
</feature>
<feature type="binding site" evidence="1">
    <location>
        <position position="322"/>
    </location>
    <ligand>
        <name>ATP</name>
        <dbReference type="ChEBI" id="CHEBI:30616"/>
    </ligand>
</feature>
<feature type="binding site" evidence="1">
    <location>
        <position position="322"/>
    </location>
    <ligand>
        <name>substrate</name>
    </ligand>
</feature>
<feature type="binding site" evidence="1">
    <location>
        <position position="448"/>
    </location>
    <ligand>
        <name>ATP</name>
        <dbReference type="ChEBI" id="CHEBI:30616"/>
    </ligand>
</feature>
<gene>
    <name evidence="1" type="primary">pckA</name>
    <name type="ordered locus">BRADO0741</name>
</gene>